<comment type="function">
    <text evidence="1">Intercellular signal essential for a variety of patterning events during development.</text>
</comment>
<comment type="subcellular location">
    <molecule>Warthog protein 6</molecule>
    <subcellularLocation>
        <location evidence="1">Secreted</location>
    </subcellularLocation>
    <subcellularLocation>
        <location evidence="1">Cell surface</location>
    </subcellularLocation>
    <text evidence="1">Also secreted in either cleaved or uncleaved form to mediate signaling to other cells.</text>
</comment>
<comment type="subcellular location">
    <molecule>Warthog protein 6 N-product</molecule>
    <subcellularLocation>
        <location evidence="1">Cell membrane</location>
        <topology evidence="1">Peripheral membrane protein</topology>
        <orientation evidence="1">Extracellular side</orientation>
    </subcellularLocation>
</comment>
<comment type="subcellular location">
    <molecule>Warthog protein 6 C-product</molecule>
    <subcellularLocation>
        <location evidence="1">Secreted</location>
        <location evidence="1">Extracellular space</location>
    </subcellularLocation>
    <text evidence="1">Also secreted in either cleaved or uncleaved form to mediate signaling to other cells.</text>
</comment>
<comment type="tissue specificity">
    <text evidence="3">Expressed in 4 to 7 sheath and socket cells of the anterior sensilla.</text>
</comment>
<comment type="PTM">
    <text evidence="1">The C-terminal domain displays an autoproteolysis activity.</text>
</comment>
<comment type="similarity">
    <text evidence="5">Belongs to the hedgehog family.</text>
</comment>
<reference key="1">
    <citation type="journal article" date="1998" name="Science">
        <title>Genome sequence of the nematode C. elegans: a platform for investigating biology.</title>
        <authorList>
            <consortium name="The C. elegans sequencing consortium"/>
        </authorList>
    </citation>
    <scope>NUCLEOTIDE SEQUENCE [LARGE SCALE GENOMIC DNA]</scope>
    <source>
        <strain>Bristol N2</strain>
    </source>
</reference>
<reference key="2">
    <citation type="journal article" date="1999" name="Genome Res.">
        <title>Caenorhabditis elegans has scores of hedgehog-related genes: sequence and expression analysis.</title>
        <authorList>
            <person name="Aspoeck G."/>
            <person name="Kagoshima H."/>
            <person name="Niklaus G."/>
            <person name="Buerglin T.R."/>
        </authorList>
    </citation>
    <scope>NUCLEOTIDE SEQUENCE [MRNA] OF 1-180</scope>
    <scope>NOMENCLATURE</scope>
    <scope>TISSUE SPECIFICITY</scope>
</reference>
<reference key="3">
    <citation type="journal article" date="2003" name="Nat. Biotechnol.">
        <title>Lectin affinity capture, isotope-coded tagging and mass spectrometry to identify N-linked glycoproteins.</title>
        <authorList>
            <person name="Kaji H."/>
            <person name="Saito H."/>
            <person name="Yamauchi Y."/>
            <person name="Shinkawa T."/>
            <person name="Taoka M."/>
            <person name="Hirabayashi J."/>
            <person name="Kasai K."/>
            <person name="Takahashi N."/>
            <person name="Isobe T."/>
        </authorList>
    </citation>
    <scope>GLYCOSYLATION [LARGE SCALE ANALYSIS] AT ASN-95</scope>
    <scope>IDENTIFICATION BY MASS SPECTROMETRY</scope>
    <source>
        <strain>Bristol N2</strain>
    </source>
</reference>
<keyword id="KW-0068">Autocatalytic cleavage</keyword>
<keyword id="KW-1003">Cell membrane</keyword>
<keyword id="KW-0217">Developmental protein</keyword>
<keyword id="KW-0325">Glycoprotein</keyword>
<keyword id="KW-0378">Hydrolase</keyword>
<keyword id="KW-0472">Membrane</keyword>
<keyword id="KW-0645">Protease</keyword>
<keyword id="KW-1185">Reference proteome</keyword>
<keyword id="KW-0964">Secreted</keyword>
<keyword id="KW-0732">Signal</keyword>
<gene>
    <name type="primary">wrt-6</name>
    <name type="ORF">ZK377.1</name>
</gene>
<sequence length="593" mass="66416">MTLLNLFYCFCLLFGAVLADSIHDGGSCGTNSIPYKMEVDSEGKPVISCEAPSCLGVSSSAARRPRVLDVSCDPFKEIVCVKDLQWTSGLVEINNGTHRTLKTECCSYEGMSDAKTIKSIFLGPGQSFVGGMVEKDGEQSGFDLIKEIRKTVNADNQVQYIVGVYRMPCEATSDSSEEALPLLSRNRRKLRDRVGKYDDYEEDRNYRSERRRPFAMRRRALLQRLEDMYDDYDYEFRVVRRPFRKSRLPYNENALWPLQYSSPQRSRTFADNTYNKETVESGPLPPPPSSNYIDNVAPASPVVQSPAYPQTPAEMPLPPQSGSYSGSYSGYPTADASQYNAYPAMQQPAYQPAYQPAYQPAYQPAYQPAYQPAYSARGYSPNLNGLFGGTGMQCFSGDMEVETEDGIKMIKDLKIGDKVLSMDEAFVTYSPVIMFLHKRDEEIAEFNLIETANGHSIKLTDNHLIYVSDCRTRSDLKLVAAKEVKMDDCIHVTTDSNVVIKKKVSKISKVIETGIYSPLTSTGDIIVNRVLASCHSNLALKSLQQTFFSLYKRTSSVFHNLMFFKSSTEEGDLPVGVETLTSVMDLFIPQSFV</sequence>
<feature type="signal peptide" evidence="2">
    <location>
        <begin position="1"/>
        <end position="19"/>
    </location>
</feature>
<feature type="chain" id="PRO_0000268643" description="Warthog protein 6">
    <location>
        <begin position="20"/>
        <end position="593"/>
    </location>
</feature>
<feature type="chain" id="PRO_0000268644" description="Warthog protein 6 N-product" evidence="1">
    <location>
        <begin position="20"/>
        <end position="394"/>
    </location>
</feature>
<feature type="chain" id="PRO_0000268645" description="Warthog protein 6 C-product" evidence="1">
    <location>
        <begin position="395"/>
        <end position="593"/>
    </location>
</feature>
<feature type="site" description="Cleavage; by autolysis" evidence="1">
    <location>
        <begin position="394"/>
        <end position="395"/>
    </location>
</feature>
<feature type="site" description="Involved in auto-cleavage" evidence="1">
    <location>
        <position position="460"/>
    </location>
</feature>
<feature type="site" description="Essential for auto-cleavage" evidence="1">
    <location>
        <position position="463"/>
    </location>
</feature>
<feature type="glycosylation site" description="N-linked (GlcNAc...) asparagine" evidence="4">
    <location>
        <position position="95"/>
    </location>
</feature>
<accession>P91573</accession>
<accession>Q9U7D2</accession>
<evidence type="ECO:0000250" key="1"/>
<evidence type="ECO:0000255" key="2"/>
<evidence type="ECO:0000269" key="3">
    <source>
    </source>
</evidence>
<evidence type="ECO:0000269" key="4">
    <source>
    </source>
</evidence>
<evidence type="ECO:0000305" key="5"/>
<proteinExistence type="evidence at protein level"/>
<organism>
    <name type="scientific">Caenorhabditis elegans</name>
    <dbReference type="NCBI Taxonomy" id="6239"/>
    <lineage>
        <taxon>Eukaryota</taxon>
        <taxon>Metazoa</taxon>
        <taxon>Ecdysozoa</taxon>
        <taxon>Nematoda</taxon>
        <taxon>Chromadorea</taxon>
        <taxon>Rhabditida</taxon>
        <taxon>Rhabditina</taxon>
        <taxon>Rhabditomorpha</taxon>
        <taxon>Rhabditoidea</taxon>
        <taxon>Rhabditidae</taxon>
        <taxon>Peloderinae</taxon>
        <taxon>Caenorhabditis</taxon>
    </lineage>
</organism>
<protein>
    <recommendedName>
        <fullName>Warthog protein 6</fullName>
    </recommendedName>
    <component>
        <recommendedName>
            <fullName>Warthog protein 6 N-product</fullName>
        </recommendedName>
    </component>
    <component>
        <recommendedName>
            <fullName>Warthog protein 6 C-product</fullName>
        </recommendedName>
    </component>
</protein>
<dbReference type="EMBL" id="FO080516">
    <property type="protein sequence ID" value="CCD64326.1"/>
    <property type="molecule type" value="Genomic_DNA"/>
</dbReference>
<dbReference type="EMBL" id="AF139521">
    <property type="protein sequence ID" value="AAD33831.1"/>
    <property type="molecule type" value="mRNA"/>
</dbReference>
<dbReference type="PIR" id="T29550">
    <property type="entry name" value="T29550"/>
</dbReference>
<dbReference type="RefSeq" id="NP_508597.2">
    <property type="nucleotide sequence ID" value="NM_076196.7"/>
</dbReference>
<dbReference type="SMR" id="P91573"/>
<dbReference type="BioGRID" id="45577">
    <property type="interactions" value="2"/>
</dbReference>
<dbReference type="FunCoup" id="P91573">
    <property type="interactions" value="108"/>
</dbReference>
<dbReference type="IntAct" id="P91573">
    <property type="interactions" value="1"/>
</dbReference>
<dbReference type="STRING" id="6239.ZK377.1.1"/>
<dbReference type="MEROPS" id="C46.A04"/>
<dbReference type="GlyCosmos" id="P91573">
    <property type="glycosylation" value="1 site, No reported glycans"/>
</dbReference>
<dbReference type="iPTMnet" id="P91573"/>
<dbReference type="PaxDb" id="6239-ZK377.1"/>
<dbReference type="PeptideAtlas" id="P91573"/>
<dbReference type="EnsemblMetazoa" id="ZK377.1.1">
    <property type="protein sequence ID" value="ZK377.1.1"/>
    <property type="gene ID" value="WBGene00006952"/>
</dbReference>
<dbReference type="GeneID" id="180638"/>
<dbReference type="KEGG" id="cel:CELE_ZK377.1"/>
<dbReference type="UCSC" id="ZK377.1">
    <property type="organism name" value="c. elegans"/>
</dbReference>
<dbReference type="AGR" id="WB:WBGene00006952"/>
<dbReference type="CTD" id="180638"/>
<dbReference type="WormBase" id="ZK377.1">
    <property type="protein sequence ID" value="CE37175"/>
    <property type="gene ID" value="WBGene00006952"/>
    <property type="gene designation" value="wrt-6"/>
</dbReference>
<dbReference type="eggNOG" id="KOG3638">
    <property type="taxonomic scope" value="Eukaryota"/>
</dbReference>
<dbReference type="GeneTree" id="ENSGT00940000173917"/>
<dbReference type="HOGENOM" id="CLU_034413_0_0_1"/>
<dbReference type="InParanoid" id="P91573"/>
<dbReference type="OMA" id="YFETLQC"/>
<dbReference type="OrthoDB" id="5212at2759"/>
<dbReference type="PhylomeDB" id="P91573"/>
<dbReference type="PRO" id="PR:P91573"/>
<dbReference type="Proteomes" id="UP000001940">
    <property type="component" value="Chromosome X"/>
</dbReference>
<dbReference type="Bgee" id="WBGene00006952">
    <property type="expression patterns" value="Expressed in pharyngeal muscle cell (C elegans) and 3 other cell types or tissues"/>
</dbReference>
<dbReference type="GO" id="GO:0009986">
    <property type="term" value="C:cell surface"/>
    <property type="evidence" value="ECO:0007669"/>
    <property type="project" value="UniProtKB-SubCell"/>
</dbReference>
<dbReference type="GO" id="GO:0031012">
    <property type="term" value="C:extracellular matrix"/>
    <property type="evidence" value="ECO:0000318"/>
    <property type="project" value="GO_Central"/>
</dbReference>
<dbReference type="GO" id="GO:0005576">
    <property type="term" value="C:extracellular region"/>
    <property type="evidence" value="ECO:0007669"/>
    <property type="project" value="UniProtKB-SubCell"/>
</dbReference>
<dbReference type="GO" id="GO:0005886">
    <property type="term" value="C:plasma membrane"/>
    <property type="evidence" value="ECO:0007669"/>
    <property type="project" value="UniProtKB-SubCell"/>
</dbReference>
<dbReference type="GO" id="GO:0008233">
    <property type="term" value="F:peptidase activity"/>
    <property type="evidence" value="ECO:0007669"/>
    <property type="project" value="UniProtKB-KW"/>
</dbReference>
<dbReference type="GO" id="GO:0007267">
    <property type="term" value="P:cell-cell signaling"/>
    <property type="evidence" value="ECO:0007669"/>
    <property type="project" value="InterPro"/>
</dbReference>
<dbReference type="GO" id="GO:0016539">
    <property type="term" value="P:intein-mediated protein splicing"/>
    <property type="evidence" value="ECO:0007669"/>
    <property type="project" value="InterPro"/>
</dbReference>
<dbReference type="GO" id="GO:0016540">
    <property type="term" value="P:protein autoprocessing"/>
    <property type="evidence" value="ECO:0007669"/>
    <property type="project" value="InterPro"/>
</dbReference>
<dbReference type="GO" id="GO:0048731">
    <property type="term" value="P:system development"/>
    <property type="evidence" value="ECO:0007669"/>
    <property type="project" value="UniProtKB-ARBA"/>
</dbReference>
<dbReference type="CDD" id="cd00081">
    <property type="entry name" value="Hint"/>
    <property type="match status" value="1"/>
</dbReference>
<dbReference type="Gene3D" id="2.170.16.10">
    <property type="entry name" value="Hedgehog/Intein (Hint) domain"/>
    <property type="match status" value="1"/>
</dbReference>
<dbReference type="InterPro" id="IPR052140">
    <property type="entry name" value="Dev_Signal_Hedgehog-like"/>
</dbReference>
<dbReference type="InterPro" id="IPR001657">
    <property type="entry name" value="Hedgehog"/>
</dbReference>
<dbReference type="InterPro" id="IPR001767">
    <property type="entry name" value="Hedgehog_Hint"/>
</dbReference>
<dbReference type="InterPro" id="IPR003586">
    <property type="entry name" value="Hint_dom_C"/>
</dbReference>
<dbReference type="InterPro" id="IPR003587">
    <property type="entry name" value="Hint_dom_N"/>
</dbReference>
<dbReference type="InterPro" id="IPR036844">
    <property type="entry name" value="Hint_dom_sf"/>
</dbReference>
<dbReference type="InterPro" id="IPR006141">
    <property type="entry name" value="Intein_N"/>
</dbReference>
<dbReference type="PANTHER" id="PTHR46706">
    <property type="entry name" value="PROTEIN QUA-1-RELATED"/>
    <property type="match status" value="1"/>
</dbReference>
<dbReference type="PANTHER" id="PTHR46706:SF12">
    <property type="entry name" value="PROTEIN QUA-1-RELATED"/>
    <property type="match status" value="1"/>
</dbReference>
<dbReference type="Pfam" id="PF01079">
    <property type="entry name" value="Hint"/>
    <property type="match status" value="1"/>
</dbReference>
<dbReference type="PRINTS" id="PR00632">
    <property type="entry name" value="SONICHHOG"/>
</dbReference>
<dbReference type="SMART" id="SM00305">
    <property type="entry name" value="HintC"/>
    <property type="match status" value="1"/>
</dbReference>
<dbReference type="SMART" id="SM00306">
    <property type="entry name" value="HintN"/>
    <property type="match status" value="1"/>
</dbReference>
<dbReference type="SUPFAM" id="SSF51294">
    <property type="entry name" value="Hedgehog/intein (Hint) domain"/>
    <property type="match status" value="1"/>
</dbReference>
<dbReference type="PROSITE" id="PS50817">
    <property type="entry name" value="INTEIN_N_TER"/>
    <property type="match status" value="1"/>
</dbReference>
<name>WRT6_CAEEL</name>